<gene>
    <name evidence="1" type="primary">aaeA</name>
    <name type="ordered locus">EcolC_0465</name>
</gene>
<organism>
    <name type="scientific">Escherichia coli (strain ATCC 8739 / DSM 1576 / NBRC 3972 / NCIMB 8545 / WDCM 00012 / Crooks)</name>
    <dbReference type="NCBI Taxonomy" id="481805"/>
    <lineage>
        <taxon>Bacteria</taxon>
        <taxon>Pseudomonadati</taxon>
        <taxon>Pseudomonadota</taxon>
        <taxon>Gammaproteobacteria</taxon>
        <taxon>Enterobacterales</taxon>
        <taxon>Enterobacteriaceae</taxon>
        <taxon>Escherichia</taxon>
    </lineage>
</organism>
<keyword id="KW-0997">Cell inner membrane</keyword>
<keyword id="KW-1003">Cell membrane</keyword>
<keyword id="KW-0472">Membrane</keyword>
<keyword id="KW-0812">Transmembrane</keyword>
<keyword id="KW-1133">Transmembrane helix</keyword>
<keyword id="KW-0813">Transport</keyword>
<reference key="1">
    <citation type="submission" date="2008-02" db="EMBL/GenBank/DDBJ databases">
        <title>Complete sequence of Escherichia coli C str. ATCC 8739.</title>
        <authorList>
            <person name="Copeland A."/>
            <person name="Lucas S."/>
            <person name="Lapidus A."/>
            <person name="Glavina del Rio T."/>
            <person name="Dalin E."/>
            <person name="Tice H."/>
            <person name="Bruce D."/>
            <person name="Goodwin L."/>
            <person name="Pitluck S."/>
            <person name="Kiss H."/>
            <person name="Brettin T."/>
            <person name="Detter J.C."/>
            <person name="Han C."/>
            <person name="Kuske C.R."/>
            <person name="Schmutz J."/>
            <person name="Larimer F."/>
            <person name="Land M."/>
            <person name="Hauser L."/>
            <person name="Kyrpides N."/>
            <person name="Mikhailova N."/>
            <person name="Ingram L."/>
            <person name="Richardson P."/>
        </authorList>
    </citation>
    <scope>NUCLEOTIDE SEQUENCE [LARGE SCALE GENOMIC DNA]</scope>
    <source>
        <strain>ATCC 8739 / DSM 1576 / NBRC 3972 / NCIMB 8545 / WDCM 00012 / Crooks</strain>
    </source>
</reference>
<evidence type="ECO:0000255" key="1">
    <source>
        <dbReference type="HAMAP-Rule" id="MF_01544"/>
    </source>
</evidence>
<feature type="chain" id="PRO_1000087661" description="p-hydroxybenzoic acid efflux pump subunit AaeA">
    <location>
        <begin position="1"/>
        <end position="310"/>
    </location>
</feature>
<feature type="transmembrane region" description="Helical" evidence="1">
    <location>
        <begin position="12"/>
        <end position="32"/>
    </location>
</feature>
<comment type="function">
    <text evidence="1">Forms an efflux pump with AaeB.</text>
</comment>
<comment type="subcellular location">
    <subcellularLocation>
        <location evidence="1">Cell inner membrane</location>
        <topology evidence="1">Single-pass membrane protein</topology>
    </subcellularLocation>
</comment>
<comment type="induction">
    <text evidence="1">Positively coregulated with aaeB and aaeX by AaeR.</text>
</comment>
<comment type="similarity">
    <text evidence="1">Belongs to the membrane fusion protein (MFP) (TC 8.A.1) family.</text>
</comment>
<sequence>MKTLIRKFSRTAITVVLVILAFIAIFNAWVYYTESPWTRDARFSADVVAIAPDVSGLITQVNVHDNQLVKKGQVLFTIDQPRYQKALEEAQADVAYYQVLAQEKRQEAGRRNRLGVQAMSREEIDQANNVLQTVLHQLAKAQATRDLAKLDLERTVIRAPADGWVTNLNVYTGEFITRGSTAVALVKQNSFYVLAYMEETKLEGVRPGYRAEITPLGSNKVLKGTVDSVAAGVTNASSTRDDKGMATIDSNLEWVRLAQRVPVRIRLDNQQENIWPAGTTATVVVTGKQDRDESQDSFFRKMAHRLREFG</sequence>
<name>AAEA_ECOLC</name>
<accession>B1IQN8</accession>
<proteinExistence type="inferred from homology"/>
<dbReference type="EMBL" id="CP000946">
    <property type="protein sequence ID" value="ACA76142.1"/>
    <property type="molecule type" value="Genomic_DNA"/>
</dbReference>
<dbReference type="RefSeq" id="WP_000854033.1">
    <property type="nucleotide sequence ID" value="NZ_MTFT01000027.1"/>
</dbReference>
<dbReference type="SMR" id="B1IQN8"/>
<dbReference type="KEGG" id="ecl:EcolC_0465"/>
<dbReference type="HOGENOM" id="CLU_018816_15_2_6"/>
<dbReference type="GO" id="GO:0005886">
    <property type="term" value="C:plasma membrane"/>
    <property type="evidence" value="ECO:0007669"/>
    <property type="project" value="UniProtKB-SubCell"/>
</dbReference>
<dbReference type="GO" id="GO:0022857">
    <property type="term" value="F:transmembrane transporter activity"/>
    <property type="evidence" value="ECO:0007669"/>
    <property type="project" value="UniProtKB-UniRule"/>
</dbReference>
<dbReference type="FunFam" id="2.40.30.170:FF:000002">
    <property type="entry name" value="p-hydroxybenzoic acid efflux pump subunit AaeA"/>
    <property type="match status" value="1"/>
</dbReference>
<dbReference type="FunFam" id="2.40.50.100:FF:000018">
    <property type="entry name" value="p-hydroxybenzoic acid efflux pump subunit AaeA"/>
    <property type="match status" value="1"/>
</dbReference>
<dbReference type="Gene3D" id="2.40.30.170">
    <property type="match status" value="1"/>
</dbReference>
<dbReference type="Gene3D" id="2.40.50.100">
    <property type="match status" value="1"/>
</dbReference>
<dbReference type="HAMAP" id="MF_01544">
    <property type="entry name" value="AaeA"/>
    <property type="match status" value="1"/>
</dbReference>
<dbReference type="InterPro" id="IPR043602">
    <property type="entry name" value="CusB-like_dom_1"/>
</dbReference>
<dbReference type="InterPro" id="IPR032317">
    <property type="entry name" value="CusB_D23"/>
</dbReference>
<dbReference type="InterPro" id="IPR050393">
    <property type="entry name" value="MFP_Efflux_Pump"/>
</dbReference>
<dbReference type="InterPro" id="IPR022871">
    <property type="entry name" value="PHBA_efflux_pump_AaeA"/>
</dbReference>
<dbReference type="InterPro" id="IPR006143">
    <property type="entry name" value="RND_pump_MFP"/>
</dbReference>
<dbReference type="NCBIfam" id="NF007850">
    <property type="entry name" value="PRK10559.1"/>
    <property type="match status" value="1"/>
</dbReference>
<dbReference type="NCBIfam" id="TIGR01730">
    <property type="entry name" value="RND_mfp"/>
    <property type="match status" value="1"/>
</dbReference>
<dbReference type="PANTHER" id="PTHR30367:SF12">
    <property type="entry name" value="P-HYDROXYBENZOIC ACID EFFLUX PUMP SUBUNIT AAEA"/>
    <property type="match status" value="1"/>
</dbReference>
<dbReference type="PANTHER" id="PTHR30367">
    <property type="entry name" value="P-HYDROXYBENZOIC ACID EFFLUX PUMP SUBUNIT AAEA-RELATED"/>
    <property type="match status" value="1"/>
</dbReference>
<dbReference type="Pfam" id="PF00529">
    <property type="entry name" value="CusB_dom_1"/>
    <property type="match status" value="1"/>
</dbReference>
<dbReference type="Pfam" id="PF16576">
    <property type="entry name" value="HlyD_D23"/>
    <property type="match status" value="1"/>
</dbReference>
<dbReference type="SUPFAM" id="SSF111369">
    <property type="entry name" value="HlyD-like secretion proteins"/>
    <property type="match status" value="1"/>
</dbReference>
<protein>
    <recommendedName>
        <fullName evidence="1">p-hydroxybenzoic acid efflux pump subunit AaeA</fullName>
        <shortName evidence="1">pHBA efflux pump protein A</shortName>
    </recommendedName>
</protein>